<sequence>MEAVIKVISSACKTYCGKISPSKKEIGAMLSLLQKEGLLMSPSDLYSPGSWDPITAALSQRAMVLGKSGELKTWGLVLGALKAAREEQVTSEQAKFWLGLGGGRVSPPGPECIEKPATERRIDKGEEVGETTAQRDAKMAPEKMATPKTVGTSCYQCGTATGCNCATASAPPPPYVGSGLYPSLAGVGEQQGQGGDTPWGAEQPRAEPGHAGLAPGPALTDWARIREELASTGPPVVAMPVVIKTEGPAWTPLEPKLITRLADTVRTKGLRSPITMAEVEALMSSPLLPHDVTNLMRVILGPAPYALWMDAWGVQLQTVIAAATRDPRHPANGQGRGERTNLDRLKGLADGMVGNPQGQAALLRPGELVAITASALQAFREVARLAEPAGPWADITQGPSESFVDFANRLIKAVEGSDLPPSARAPVIIDCFRQKSQPDIQQLIRAAPSTLTTPGEIIKYVLDRQKIAPLTDQGIAAAMSSAIQPLVMAVVNRERDGQTGSGGRARGLCYTCGSPGHYQAQCPKKRKSGNSRERCQLCDGMGHNAKQCRRRDGNQGQRPGKGLSSGSWPVSEQPAVSLAMTMEHKDRPLVRVILTNTGSHPVKQRSVYITALLDSGADITIISEEDWPTDWPVMEAANPQIHGIGGGIPMRKSRDMIEVGVINRDGSLERPLLLFPAVAMVRGSILGRDCLQGLGLRLTNL</sequence>
<evidence type="ECO:0000250" key="1">
    <source>
        <dbReference type="UniProtKB" id="P03322"/>
    </source>
</evidence>
<evidence type="ECO:0000255" key="2">
    <source>
        <dbReference type="PROSITE-ProRule" id="PRU00047"/>
    </source>
</evidence>
<evidence type="ECO:0000255" key="3">
    <source>
        <dbReference type="PROSITE-ProRule" id="PRU00275"/>
    </source>
</evidence>
<evidence type="ECO:0000255" key="4">
    <source>
        <dbReference type="PROSITE-ProRule" id="PRU10094"/>
    </source>
</evidence>
<evidence type="ECO:0000256" key="5">
    <source>
        <dbReference type="SAM" id="MobiDB-lite"/>
    </source>
</evidence>
<evidence type="ECO:0000269" key="6">
    <source>
    </source>
</evidence>
<evidence type="ECO:0000269" key="7">
    <source>
    </source>
</evidence>
<evidence type="ECO:0000303" key="8">
    <source>
    </source>
</evidence>
<evidence type="ECO:0000303" key="9">
    <source>
    </source>
</evidence>
<evidence type="ECO:0000305" key="10">
    <source>
    </source>
</evidence>
<gene>
    <name type="primary">gag</name>
</gene>
<organism>
    <name type="scientific">Avian leukosis virus subgroup A (isolate RSA)</name>
    <name type="common">ALV-A RSA</name>
    <dbReference type="NCBI Taxonomy" id="363745"/>
    <lineage>
        <taxon>Viruses</taxon>
        <taxon>Riboviria</taxon>
        <taxon>Pararnavirae</taxon>
        <taxon>Artverviricota</taxon>
        <taxon>Revtraviricetes</taxon>
        <taxon>Ortervirales</taxon>
        <taxon>Retroviridae</taxon>
        <taxon>Orthoretrovirinae</taxon>
        <taxon>Alpharetrovirus</taxon>
        <taxon>Avian leukosis virus</taxon>
    </lineage>
</organism>
<feature type="chain" id="PRO_0000442110" description="Gag polyprotein">
    <location>
        <begin position="1"/>
        <end position="701"/>
    </location>
</feature>
<feature type="chain" id="PRO_0000397073" description="Matrix protein p19" evidence="1">
    <location>
        <begin position="1"/>
        <end position="155"/>
    </location>
</feature>
<feature type="chain" id="PRO_0000397074" description="p2A" evidence="1">
    <location>
        <begin position="156"/>
        <end position="166"/>
    </location>
</feature>
<feature type="chain" id="PRO_0000397075" description="p2B" evidence="1">
    <location>
        <begin position="167"/>
        <end position="177"/>
    </location>
</feature>
<feature type="chain" id="PRO_0000397076" description="p10" evidence="1">
    <location>
        <begin position="178"/>
        <end position="239"/>
    </location>
</feature>
<feature type="chain" id="PRO_0000397077" description="Capsid protein p27, alternate cleaved 2" evidence="1">
    <location>
        <begin position="240"/>
        <end position="479"/>
    </location>
</feature>
<feature type="chain" id="PRO_0000442111" description="Capsid protein p27, alternate cleaved 1" evidence="1">
    <location>
        <begin position="240"/>
        <end position="476"/>
    </location>
</feature>
<feature type="peptide" id="PRO_0000397078" description="Spacer peptide" evidence="1">
    <location>
        <begin position="480"/>
        <end position="488"/>
    </location>
</feature>
<feature type="chain" id="PRO_0000397079" description="Nucleocapsid protein p12" evidence="1">
    <location>
        <begin position="489"/>
        <end position="577"/>
    </location>
</feature>
<feature type="chain" id="PRO_0000397080" description="Protease p15" evidence="1">
    <location>
        <begin position="578"/>
        <end position="701"/>
    </location>
</feature>
<feature type="domain" description="Peptidase A2" evidence="3">
    <location>
        <begin position="609"/>
        <end position="690"/>
    </location>
</feature>
<feature type="zinc finger region" description="CCHC-type 1" evidence="2">
    <location>
        <begin position="507"/>
        <end position="524"/>
    </location>
</feature>
<feature type="zinc finger region" description="CCHC-type 2" evidence="2">
    <location>
        <begin position="533"/>
        <end position="550"/>
    </location>
</feature>
<feature type="region of interest" description="Disordered" evidence="5">
    <location>
        <begin position="124"/>
        <end position="144"/>
    </location>
</feature>
<feature type="region of interest" description="Involved in capsid protein dimerization" evidence="1">
    <location>
        <begin position="217"/>
        <end position="259"/>
    </location>
</feature>
<feature type="region of interest" description="Involved in capsid protein dimerization" evidence="1">
    <location>
        <begin position="290"/>
        <end position="298"/>
    </location>
</feature>
<feature type="region of interest" description="Involved in capsid protein dimerization" evidence="1">
    <location>
        <begin position="351"/>
        <end position="362"/>
    </location>
</feature>
<feature type="region of interest" description="Disordered" evidence="5">
    <location>
        <begin position="544"/>
        <end position="571"/>
    </location>
</feature>
<feature type="short sequence motif" description="PPXY motif">
    <location>
        <begin position="172"/>
        <end position="175"/>
    </location>
</feature>
<feature type="short sequence motif" description="LYPX(n)L motif" evidence="1">
    <location>
        <begin position="180"/>
        <end position="184"/>
    </location>
</feature>
<feature type="short sequence motif" description="Nuclear export signal" evidence="1">
    <location>
        <begin position="219"/>
        <end position="229"/>
    </location>
</feature>
<feature type="short sequence motif" description="Nuclear/nucleolar localization signal" evidence="1">
    <location>
        <begin position="524"/>
        <end position="527"/>
    </location>
</feature>
<feature type="compositionally biased region" description="Basic and acidic residues" evidence="5">
    <location>
        <begin position="124"/>
        <end position="141"/>
    </location>
</feature>
<feature type="active site" description="For protease activity; shared with dimeric partner" evidence="4">
    <location>
        <position position="614"/>
    </location>
</feature>
<feature type="site" description="Cleavage; by viral protease p15" evidence="1">
    <location>
        <begin position="155"/>
        <end position="156"/>
    </location>
</feature>
<feature type="site" description="Cleavage; by viral protease p15" evidence="1">
    <location>
        <begin position="166"/>
        <end position="167"/>
    </location>
</feature>
<feature type="site" description="Cleavage; by viral protease p15" evidence="1">
    <location>
        <begin position="177"/>
        <end position="178"/>
    </location>
</feature>
<feature type="site" description="Cleavage; by viral protease p15" evidence="1">
    <location>
        <begin position="239"/>
        <end position="240"/>
    </location>
</feature>
<feature type="site" description="Involved in capsid protein dimerization upon acidification" evidence="1">
    <location>
        <position position="418"/>
    </location>
</feature>
<feature type="site" description="Involved in capsid protein dimerization upon acidification" evidence="1">
    <location>
        <position position="430"/>
    </location>
</feature>
<feature type="site" description="Cleavage; by viral protease p15" evidence="1">
    <location>
        <begin position="476"/>
        <end position="477"/>
    </location>
</feature>
<feature type="site" description="Cleavage; by viral protease p15" evidence="1">
    <location>
        <begin position="479"/>
        <end position="480"/>
    </location>
</feature>
<feature type="site" description="Cleavage; by viral protease p15" evidence="1">
    <location>
        <begin position="488"/>
        <end position="489"/>
    </location>
</feature>
<feature type="site" description="Cleavage; by viral protease p15" evidence="1">
    <location>
        <begin position="577"/>
        <end position="578"/>
    </location>
</feature>
<keyword id="KW-0064">Aspartyl protease</keyword>
<keyword id="KW-0167">Capsid protein</keyword>
<keyword id="KW-1048">Host nucleus</keyword>
<keyword id="KW-0378">Hydrolase</keyword>
<keyword id="KW-0479">Metal-binding</keyword>
<keyword id="KW-0645">Protease</keyword>
<keyword id="KW-1185">Reference proteome</keyword>
<keyword id="KW-0677">Repeat</keyword>
<keyword id="KW-0688">Ribosomal frameshifting</keyword>
<keyword id="KW-0118">Viral capsid assembly</keyword>
<keyword id="KW-1273">Viral capsid maturation</keyword>
<keyword id="KW-0468">Viral matrix protein</keyword>
<keyword id="KW-1188">Viral release from host cell</keyword>
<keyword id="KW-0946">Virion</keyword>
<keyword id="KW-0862">Zinc</keyword>
<keyword id="KW-0863">Zinc-finger</keyword>
<proteinExistence type="evidence at protein level"/>
<reference key="1">
    <citation type="journal article" date="1992" name="Nucleic Acids Res.">
        <title>Complete nucleotide sequence of a highly infectious avian leukosis virus.</title>
        <authorList>
            <person name="Bieth E."/>
            <person name="Darlix J.L."/>
        </authorList>
    </citation>
    <scope>NUCLEOTIDE SEQUENCE [GENOMIC RNA]</scope>
</reference>
<reference key="2">
    <citation type="journal article" date="1995" name="FEBS Lett.">
        <title>Ribosomal frameshifting at the Gag-Pol junction in avian leukemia sarcoma virus forms a novel cleavage site.</title>
        <authorList>
            <person name="Arad G."/>
            <person name="Bar-Meir R."/>
            <person name="Kotler M."/>
        </authorList>
    </citation>
    <scope>RIBOSOMAL FRAMESHIFT</scope>
</reference>
<reference key="3">
    <citation type="journal article" date="2007" name="J. Mol. Biol.">
        <title>Structural requirements for nucleocapsid protein-mediated dimerization of avian leukosis virus RNA.</title>
        <authorList>
            <person name="Ali M.B."/>
            <person name="Chaminade F."/>
            <person name="Kanevsky I."/>
            <person name="Ennifar E."/>
            <person name="Josset L."/>
            <person name="Ficheux D."/>
            <person name="Darlix J.L."/>
            <person name="Fosse P."/>
        </authorList>
    </citation>
    <scope>FUNCTION (NUCLEOCAPSID PROTEIN P12)</scope>
</reference>
<reference key="4">
    <citation type="journal article" date="2018" name="Proc. Natl. Acad. Sci. U.S.A.">
        <title>HIV-1 gag recruits PACSIN2 to promote virus spreading.</title>
        <authorList>
            <person name="Popov S."/>
            <person name="Popova E."/>
            <person name="Inoue M."/>
            <person name="Wu Y."/>
            <person name="Goettlinger H."/>
        </authorList>
    </citation>
    <scope>INTERACTION WITH HOST PACSIN2 (GAG POLYPROTEIN)</scope>
</reference>
<accession>P0C776</accession>
<name>GAG_ALVA</name>
<dbReference type="EC" id="3.4.23.-"/>
<dbReference type="EMBL" id="M37980">
    <property type="status" value="NOT_ANNOTATED_CDS"/>
    <property type="molecule type" value="Genomic_RNA"/>
</dbReference>
<dbReference type="BMRB" id="P0C776"/>
<dbReference type="SMR" id="P0C776"/>
<dbReference type="Proteomes" id="UP000002238">
    <property type="component" value="Genome"/>
</dbReference>
<dbReference type="GO" id="GO:0044196">
    <property type="term" value="C:host cell nucleolus"/>
    <property type="evidence" value="ECO:0007669"/>
    <property type="project" value="UniProtKB-SubCell"/>
</dbReference>
<dbReference type="GO" id="GO:0044095">
    <property type="term" value="C:host cell nucleoplasm"/>
    <property type="evidence" value="ECO:0007669"/>
    <property type="project" value="UniProtKB-SubCell"/>
</dbReference>
<dbReference type="GO" id="GO:0019028">
    <property type="term" value="C:viral capsid"/>
    <property type="evidence" value="ECO:0007669"/>
    <property type="project" value="UniProtKB-KW"/>
</dbReference>
<dbReference type="GO" id="GO:0004190">
    <property type="term" value="F:aspartic-type endopeptidase activity"/>
    <property type="evidence" value="ECO:0007669"/>
    <property type="project" value="UniProtKB-KW"/>
</dbReference>
<dbReference type="GO" id="GO:0003676">
    <property type="term" value="F:nucleic acid binding"/>
    <property type="evidence" value="ECO:0007669"/>
    <property type="project" value="InterPro"/>
</dbReference>
<dbReference type="GO" id="GO:0039660">
    <property type="term" value="F:structural constituent of virion"/>
    <property type="evidence" value="ECO:0007669"/>
    <property type="project" value="UniProtKB-KW"/>
</dbReference>
<dbReference type="GO" id="GO:0008270">
    <property type="term" value="F:zinc ion binding"/>
    <property type="evidence" value="ECO:0007669"/>
    <property type="project" value="UniProtKB-KW"/>
</dbReference>
<dbReference type="GO" id="GO:0006508">
    <property type="term" value="P:proteolysis"/>
    <property type="evidence" value="ECO:0007669"/>
    <property type="project" value="UniProtKB-KW"/>
</dbReference>
<dbReference type="GO" id="GO:0046797">
    <property type="term" value="P:viral procapsid maturation"/>
    <property type="evidence" value="ECO:0007669"/>
    <property type="project" value="UniProtKB-KW"/>
</dbReference>
<dbReference type="GO" id="GO:0075523">
    <property type="term" value="P:viral translational frameshifting"/>
    <property type="evidence" value="ECO:0007669"/>
    <property type="project" value="UniProtKB-KW"/>
</dbReference>
<dbReference type="CDD" id="cd05482">
    <property type="entry name" value="HIV_retropepsin_like"/>
    <property type="match status" value="1"/>
</dbReference>
<dbReference type="FunFam" id="1.10.375.10:FF:000003">
    <property type="entry name" value="Gag polyprotein"/>
    <property type="match status" value="1"/>
</dbReference>
<dbReference type="Gene3D" id="1.10.1200.30">
    <property type="match status" value="1"/>
</dbReference>
<dbReference type="Gene3D" id="2.40.70.10">
    <property type="entry name" value="Acid Proteases"/>
    <property type="match status" value="1"/>
</dbReference>
<dbReference type="Gene3D" id="1.10.375.10">
    <property type="entry name" value="Human Immunodeficiency Virus Type 1 Capsid Protein"/>
    <property type="match status" value="1"/>
</dbReference>
<dbReference type="Gene3D" id="1.10.150.90">
    <property type="entry name" value="Immunodeficiency lentiviruses, gag gene matrix protein p17"/>
    <property type="match status" value="1"/>
</dbReference>
<dbReference type="Gene3D" id="4.10.60.10">
    <property type="entry name" value="Zinc finger, CCHC-type"/>
    <property type="match status" value="1"/>
</dbReference>
<dbReference type="InterPro" id="IPR001969">
    <property type="entry name" value="Aspartic_peptidase_AS"/>
</dbReference>
<dbReference type="InterPro" id="IPR004028">
    <property type="entry name" value="Gag_M"/>
</dbReference>
<dbReference type="InterPro" id="IPR012344">
    <property type="entry name" value="Matrix_HIV/RSV_N"/>
</dbReference>
<dbReference type="InterPro" id="IPR001995">
    <property type="entry name" value="Peptidase_A2_cat"/>
</dbReference>
<dbReference type="InterPro" id="IPR021109">
    <property type="entry name" value="Peptidase_aspartic_dom_sf"/>
</dbReference>
<dbReference type="InterPro" id="IPR050195">
    <property type="entry name" value="Primate_lentivir_Gag_pol-like"/>
</dbReference>
<dbReference type="InterPro" id="IPR034170">
    <property type="entry name" value="Retropepsin-like_cat_dom"/>
</dbReference>
<dbReference type="InterPro" id="IPR018061">
    <property type="entry name" value="Retropepsins"/>
</dbReference>
<dbReference type="InterPro" id="IPR008916">
    <property type="entry name" value="Retrov_capsid_C"/>
</dbReference>
<dbReference type="InterPro" id="IPR008919">
    <property type="entry name" value="Retrov_capsid_N"/>
</dbReference>
<dbReference type="InterPro" id="IPR010999">
    <property type="entry name" value="Retrovr_matrix"/>
</dbReference>
<dbReference type="InterPro" id="IPR001878">
    <property type="entry name" value="Znf_CCHC"/>
</dbReference>
<dbReference type="InterPro" id="IPR036875">
    <property type="entry name" value="Znf_CCHC_sf"/>
</dbReference>
<dbReference type="PANTHER" id="PTHR40389">
    <property type="entry name" value="ENDOGENOUS RETROVIRUS GROUP K MEMBER 24 GAG POLYPROTEIN-RELATED"/>
    <property type="match status" value="1"/>
</dbReference>
<dbReference type="PANTHER" id="PTHR40389:SF3">
    <property type="entry name" value="IGE-BINDING PROTEIN"/>
    <property type="match status" value="1"/>
</dbReference>
<dbReference type="Pfam" id="PF00607">
    <property type="entry name" value="Gag_p24"/>
    <property type="match status" value="1"/>
</dbReference>
<dbReference type="Pfam" id="PF02813">
    <property type="entry name" value="Retro_M"/>
    <property type="match status" value="1"/>
</dbReference>
<dbReference type="Pfam" id="PF00077">
    <property type="entry name" value="RVP"/>
    <property type="match status" value="1"/>
</dbReference>
<dbReference type="Pfam" id="PF00098">
    <property type="entry name" value="zf-CCHC"/>
    <property type="match status" value="1"/>
</dbReference>
<dbReference type="SMART" id="SM00343">
    <property type="entry name" value="ZnF_C2HC"/>
    <property type="match status" value="2"/>
</dbReference>
<dbReference type="SUPFAM" id="SSF50630">
    <property type="entry name" value="Acid proteases"/>
    <property type="match status" value="1"/>
</dbReference>
<dbReference type="SUPFAM" id="SSF47836">
    <property type="entry name" value="Retroviral matrix proteins"/>
    <property type="match status" value="1"/>
</dbReference>
<dbReference type="SUPFAM" id="SSF47353">
    <property type="entry name" value="Retrovirus capsid dimerization domain-like"/>
    <property type="match status" value="1"/>
</dbReference>
<dbReference type="SUPFAM" id="SSF47943">
    <property type="entry name" value="Retrovirus capsid protein, N-terminal core domain"/>
    <property type="match status" value="1"/>
</dbReference>
<dbReference type="SUPFAM" id="SSF57756">
    <property type="entry name" value="Retrovirus zinc finger-like domains"/>
    <property type="match status" value="1"/>
</dbReference>
<dbReference type="PROSITE" id="PS50175">
    <property type="entry name" value="ASP_PROT_RETROV"/>
    <property type="match status" value="1"/>
</dbReference>
<dbReference type="PROSITE" id="PS00141">
    <property type="entry name" value="ASP_PROTEASE"/>
    <property type="match status" value="1"/>
</dbReference>
<dbReference type="PROSITE" id="PS50158">
    <property type="entry name" value="ZF_CCHC"/>
    <property type="match status" value="1"/>
</dbReference>
<protein>
    <recommendedName>
        <fullName>Gag polyprotein</fullName>
    </recommendedName>
    <component>
        <recommendedName>
            <fullName>Matrix protein p19</fullName>
        </recommendedName>
    </component>
    <component>
        <recommendedName>
            <fullName>p2A</fullName>
        </recommendedName>
    </component>
    <component>
        <recommendedName>
            <fullName>p2B</fullName>
        </recommendedName>
    </component>
    <component>
        <recommendedName>
            <fullName>p10</fullName>
        </recommendedName>
    </component>
    <component>
        <recommendedName>
            <fullName>Capsid protein p27, alternate cleaved 1</fullName>
        </recommendedName>
    </component>
    <component>
        <recommendedName>
            <fullName>Capsid protein p27, alternate cleaved 2</fullName>
        </recommendedName>
    </component>
    <component>
        <recommendedName>
            <fullName>Spacer peptide</fullName>
            <shortName>SP</shortName>
        </recommendedName>
        <alternativeName>
            <fullName>p3</fullName>
        </alternativeName>
    </component>
    <component>
        <recommendedName>
            <fullName>Nucleocapsid protein p12</fullName>
        </recommendedName>
        <alternativeName>
            <fullName evidence="8">NCp12</fullName>
        </alternativeName>
    </component>
    <component>
        <recommendedName>
            <fullName>Protease p15</fullName>
            <ecNumber>3.4.23.-</ecNumber>
        </recommendedName>
    </component>
</protein>
<comment type="function">
    <molecule>Gag polyprotein</molecule>
    <text evidence="1">The p10 domain folds back and interacts with the capsid protein domain during Gag polyprotein assembly in the immature particle (before the maturation cleavage thatz splits the 2 domains).</text>
</comment>
<comment type="function">
    <molecule>Capsid protein p27, alternate cleaved 1</molecule>
    <text evidence="1">Self-associates to form the irregular polyhedron core composed of hexamers and pentamers, that encapsulates the genomic RNA-nucleocapsid complex. Assembles as a tube in vitro (By similarity). Binds to inositol hexakisphosphate (IP6), which allows the assembly of the polyhedral capsid (By similarity).</text>
</comment>
<comment type="function">
    <molecule>Capsid protein p27, alternate cleaved 2</molecule>
    <text evidence="1">Self-associates to form the irregular polyhedron core composed of hexamers and pentamers, that encapsulates the genomic RNA-nucleocapsid complex. Assembles as a tube in vitro (By similarity). Binds to inositol hexakisphosphate (IP6), which allows the assembly of the polyhedral capsid (By similarity).</text>
</comment>
<comment type="function">
    <molecule>Nucleocapsid protein p12</molecule>
    <text evidence="1 6">Binds strongly to viral nucleic acids and promotes their packaging (By similarity). Plays a role in the maturation-stabilization of the viral dimeric RNA via highly structured zinc-binding motifs (PubMed:17706668).</text>
</comment>
<comment type="function">
    <molecule>Spacer peptide</molecule>
    <text evidence="1">Plays a role in the oligomerization of the Gag polyprotein and in the stabilization of the immature particle. Essential layering element during tube assembly. Allows the cooperative binging of Gag to the host plasma membrane.</text>
</comment>
<comment type="function">
    <molecule>Protease p15</molecule>
    <text evidence="3">Aspartyl protease that mediates proteolytic cleavages of Gag and Gag-Pol polyproteins during or shortly after the release of the virion from the plasma membrane. Cleavages take place as an ordered, step-wise cascade to yield mature proteins. This process is called maturation. Displays maximal activity during the budding process just prior to particle release from the cell.</text>
</comment>
<comment type="subunit">
    <molecule>Protease p15</molecule>
    <text evidence="1">Active as a homodimer.</text>
</comment>
<comment type="subunit">
    <molecule>Capsid protein p27, alternate cleaved 1</molecule>
    <text evidence="1">Homodimer. Homomultimer. Homohexamer.</text>
</comment>
<comment type="subunit">
    <molecule>Capsid protein p27, alternate cleaved 2</molecule>
    <text evidence="1">Homodimer. Homomultimer. Homohexamer.</text>
</comment>
<comment type="subunit">
    <molecule>Gag polyprotein</molecule>
    <text evidence="10">Homohexamer. Interacts (via p2B domain) with host PACSIN2; this interaction probably allows PACSIN2 recruitment to viral assembly sites.</text>
</comment>
<comment type="subcellular location">
    <molecule>Matrix protein p19</molecule>
    <subcellularLocation>
        <location evidence="1">Virion</location>
    </subcellularLocation>
</comment>
<comment type="subcellular location">
    <molecule>Capsid protein p27, alternate cleaved 1</molecule>
    <subcellularLocation>
        <location evidence="1">Virion</location>
    </subcellularLocation>
</comment>
<comment type="subcellular location">
    <molecule>Capsid protein p27, alternate cleaved 2</molecule>
    <subcellularLocation>
        <location evidence="1">Virion</location>
    </subcellularLocation>
</comment>
<comment type="subcellular location">
    <molecule>Nucleocapsid protein p12</molecule>
    <subcellularLocation>
        <location evidence="1">Virion</location>
    </subcellularLocation>
</comment>
<comment type="subcellular location">
    <molecule>Gag polyprotein</molecule>
    <subcellularLocation>
        <location evidence="1">Host nucleus</location>
        <location evidence="1">Host nucleolus</location>
    </subcellularLocation>
    <subcellularLocation>
        <location evidence="1">Host nucleus</location>
        <location evidence="1">Host nucleoplasm</location>
    </subcellularLocation>
    <text evidence="1">Shuttles between nucleoplasm and nucleolus.</text>
</comment>
<comment type="alternative products">
    <event type="ribosomal frameshifting"/>
    <isoform>
        <id>P0C776-1</id>
        <name evidence="9">Gag polyprotein</name>
        <sequence type="displayed"/>
    </isoform>
    <isoform>
        <id>Q04095-1</id>
        <name evidence="9">Gag-Pol polyprotein</name>
        <sequence type="external"/>
    </isoform>
    <text evidence="7">Translation results in the formation of the Gag polyprotein. Ribosomal frameshifting at the gag/pol genes boundary produces the Gag-Pol polyprotein.</text>
</comment>
<comment type="domain">
    <molecule>Gag polyprotein</molecule>
    <text evidence="1">Late-budding domains (L domains) are short sequence motifs essential for viral particle release. They can occur individually or in close proximity within structural proteins. They interacts with sorting cellular proteins of the multivesicular body (MVB) pathway. Most of these proteins are class E vacuolar protein sorting factors belonging to ESCRT-I, ESCRT-II or ESCRT-III complexes. P2B contains two L domains: a PPXY motif which probably binds to the WW domains of HECT (homologous to E6-AP C-terminus) E3 ubiquitin ligases and a LYPX(n)L domain which is known to bind the Alix adaptator protein.</text>
</comment>
<comment type="domain">
    <molecule>Gag polyprotein</molecule>
    <text evidence="1">Contains a nuclear export signal in p10 and a nucleolar localization signal in nucleocapsid protein p12.</text>
</comment>
<comment type="domain">
    <text evidence="1">Capsid protein p27: Proton-driven dimerization of the C-terminus facilitates capsid assembly.</text>
</comment>
<comment type="PTM">
    <molecule>Gag polyprotein</molecule>
    <text evidence="1">Specific enzymatic cleavages in vivo yield mature proteins. The cleavage at the C-terminus of the Capsid protein p27 is slowly trimmed by the viral protease, sometimes being cut internally thereby generating the short version of the capsid protein and a capsid protein C-terminally extended by 3 amino acids in a ratio of 2:1.</text>
</comment>
<comment type="miscellaneous">
    <molecule>Isoform Gag polyprotein</molecule>
    <text>Produced by conventional translation.</text>
</comment>